<comment type="function">
    <text evidence="1">DNA ligase that catalyzes the formation of phosphodiester linkages between 5'-phosphoryl and 3'-hydroxyl groups in double-stranded DNA using NAD as a coenzyme and as the energy source for the reaction. It is essential for DNA replication and repair of damaged DNA.</text>
</comment>
<comment type="catalytic activity">
    <reaction evidence="1">
        <text>NAD(+) + (deoxyribonucleotide)n-3'-hydroxyl + 5'-phospho-(deoxyribonucleotide)m = (deoxyribonucleotide)n+m + AMP + beta-nicotinamide D-nucleotide.</text>
        <dbReference type="EC" id="6.5.1.2"/>
    </reaction>
</comment>
<comment type="cofactor">
    <cofactor evidence="1">
        <name>Mg(2+)</name>
        <dbReference type="ChEBI" id="CHEBI:18420"/>
    </cofactor>
    <cofactor evidence="1">
        <name>Mn(2+)</name>
        <dbReference type="ChEBI" id="CHEBI:29035"/>
    </cofactor>
</comment>
<comment type="similarity">
    <text evidence="1">Belongs to the NAD-dependent DNA ligase family. LigA subfamily.</text>
</comment>
<reference key="1">
    <citation type="journal article" date="2008" name="Appl. Environ. Microbiol.">
        <title>Genome of the epsilonproteobacterial chemolithoautotroph Sulfurimonas denitrificans.</title>
        <authorList>
            <person name="Sievert S.M."/>
            <person name="Scott K.M."/>
            <person name="Klotz M.G."/>
            <person name="Chain P.S.G."/>
            <person name="Hauser L.J."/>
            <person name="Hemp J."/>
            <person name="Huegler M."/>
            <person name="Land M."/>
            <person name="Lapidus A."/>
            <person name="Larimer F.W."/>
            <person name="Lucas S."/>
            <person name="Malfatti S.A."/>
            <person name="Meyer F."/>
            <person name="Paulsen I.T."/>
            <person name="Ren Q."/>
            <person name="Simon J."/>
            <person name="Bailey K."/>
            <person name="Diaz E."/>
            <person name="Fitzpatrick K.A."/>
            <person name="Glover B."/>
            <person name="Gwatney N."/>
            <person name="Korajkic A."/>
            <person name="Long A."/>
            <person name="Mobberley J.M."/>
            <person name="Pantry S.N."/>
            <person name="Pazder G."/>
            <person name="Peterson S."/>
            <person name="Quintanilla J.D."/>
            <person name="Sprinkle R."/>
            <person name="Stephens J."/>
            <person name="Thomas P."/>
            <person name="Vaughn R."/>
            <person name="Weber M.J."/>
            <person name="Wooten L.L."/>
        </authorList>
    </citation>
    <scope>NUCLEOTIDE SEQUENCE [LARGE SCALE GENOMIC DNA]</scope>
    <source>
        <strain>ATCC 33889 / DSM 1251</strain>
    </source>
</reference>
<protein>
    <recommendedName>
        <fullName evidence="1">DNA ligase</fullName>
        <ecNumber evidence="1">6.5.1.2</ecNumber>
    </recommendedName>
    <alternativeName>
        <fullName evidence="1">Polydeoxyribonucleotide synthase [NAD(+)]</fullName>
    </alternativeName>
</protein>
<gene>
    <name evidence="1" type="primary">ligA</name>
    <name type="ordered locus">Suden_1344</name>
</gene>
<dbReference type="EC" id="6.5.1.2" evidence="1"/>
<dbReference type="EMBL" id="CP000153">
    <property type="protein sequence ID" value="ABB44622.1"/>
    <property type="molecule type" value="Genomic_DNA"/>
</dbReference>
<dbReference type="RefSeq" id="WP_011372974.1">
    <property type="nucleotide sequence ID" value="NC_007575.1"/>
</dbReference>
<dbReference type="SMR" id="Q30QV9"/>
<dbReference type="STRING" id="326298.Suden_1344"/>
<dbReference type="KEGG" id="tdn:Suden_1344"/>
<dbReference type="eggNOG" id="COG0272">
    <property type="taxonomic scope" value="Bacteria"/>
</dbReference>
<dbReference type="HOGENOM" id="CLU_007764_2_1_7"/>
<dbReference type="OrthoDB" id="9759736at2"/>
<dbReference type="Proteomes" id="UP000002714">
    <property type="component" value="Chromosome"/>
</dbReference>
<dbReference type="GO" id="GO:0005829">
    <property type="term" value="C:cytosol"/>
    <property type="evidence" value="ECO:0007669"/>
    <property type="project" value="TreeGrafter"/>
</dbReference>
<dbReference type="GO" id="GO:0003677">
    <property type="term" value="F:DNA binding"/>
    <property type="evidence" value="ECO:0007669"/>
    <property type="project" value="InterPro"/>
</dbReference>
<dbReference type="GO" id="GO:0003911">
    <property type="term" value="F:DNA ligase (NAD+) activity"/>
    <property type="evidence" value="ECO:0007669"/>
    <property type="project" value="UniProtKB-UniRule"/>
</dbReference>
<dbReference type="GO" id="GO:0046872">
    <property type="term" value="F:metal ion binding"/>
    <property type="evidence" value="ECO:0007669"/>
    <property type="project" value="UniProtKB-KW"/>
</dbReference>
<dbReference type="GO" id="GO:0006281">
    <property type="term" value="P:DNA repair"/>
    <property type="evidence" value="ECO:0007669"/>
    <property type="project" value="UniProtKB-KW"/>
</dbReference>
<dbReference type="GO" id="GO:0006260">
    <property type="term" value="P:DNA replication"/>
    <property type="evidence" value="ECO:0007669"/>
    <property type="project" value="UniProtKB-KW"/>
</dbReference>
<dbReference type="CDD" id="cd17748">
    <property type="entry name" value="BRCT_DNA_ligase_like"/>
    <property type="match status" value="1"/>
</dbReference>
<dbReference type="CDD" id="cd00114">
    <property type="entry name" value="LIGANc"/>
    <property type="match status" value="1"/>
</dbReference>
<dbReference type="FunFam" id="1.10.150.20:FF:000007">
    <property type="entry name" value="DNA ligase"/>
    <property type="match status" value="1"/>
</dbReference>
<dbReference type="FunFam" id="2.40.50.140:FF:000012">
    <property type="entry name" value="DNA ligase"/>
    <property type="match status" value="1"/>
</dbReference>
<dbReference type="Gene3D" id="1.10.150.20">
    <property type="entry name" value="5' to 3' exonuclease, C-terminal subdomain"/>
    <property type="match status" value="2"/>
</dbReference>
<dbReference type="Gene3D" id="3.40.50.10190">
    <property type="entry name" value="BRCT domain"/>
    <property type="match status" value="1"/>
</dbReference>
<dbReference type="Gene3D" id="3.30.470.30">
    <property type="entry name" value="DNA ligase/mRNA capping enzyme"/>
    <property type="match status" value="1"/>
</dbReference>
<dbReference type="Gene3D" id="1.10.287.610">
    <property type="entry name" value="Helix hairpin bin"/>
    <property type="match status" value="1"/>
</dbReference>
<dbReference type="Gene3D" id="2.40.50.140">
    <property type="entry name" value="Nucleic acid-binding proteins"/>
    <property type="match status" value="1"/>
</dbReference>
<dbReference type="HAMAP" id="MF_01588">
    <property type="entry name" value="DNA_ligase_A"/>
    <property type="match status" value="1"/>
</dbReference>
<dbReference type="InterPro" id="IPR001357">
    <property type="entry name" value="BRCT_dom"/>
</dbReference>
<dbReference type="InterPro" id="IPR036420">
    <property type="entry name" value="BRCT_dom_sf"/>
</dbReference>
<dbReference type="InterPro" id="IPR041663">
    <property type="entry name" value="DisA/LigA_HHH"/>
</dbReference>
<dbReference type="InterPro" id="IPR001679">
    <property type="entry name" value="DNA_ligase"/>
</dbReference>
<dbReference type="InterPro" id="IPR013839">
    <property type="entry name" value="DNAligase_adenylation"/>
</dbReference>
<dbReference type="InterPro" id="IPR013840">
    <property type="entry name" value="DNAligase_N"/>
</dbReference>
<dbReference type="InterPro" id="IPR003583">
    <property type="entry name" value="Hlx-hairpin-Hlx_DNA-bd_motif"/>
</dbReference>
<dbReference type="InterPro" id="IPR012340">
    <property type="entry name" value="NA-bd_OB-fold"/>
</dbReference>
<dbReference type="InterPro" id="IPR004150">
    <property type="entry name" value="NAD_DNA_ligase_OB"/>
</dbReference>
<dbReference type="InterPro" id="IPR010994">
    <property type="entry name" value="RuvA_2-like"/>
</dbReference>
<dbReference type="NCBIfam" id="TIGR00575">
    <property type="entry name" value="dnlj"/>
    <property type="match status" value="1"/>
</dbReference>
<dbReference type="NCBIfam" id="NF005932">
    <property type="entry name" value="PRK07956.1"/>
    <property type="match status" value="1"/>
</dbReference>
<dbReference type="PANTHER" id="PTHR23389">
    <property type="entry name" value="CHROMOSOME TRANSMISSION FIDELITY FACTOR 18"/>
    <property type="match status" value="1"/>
</dbReference>
<dbReference type="PANTHER" id="PTHR23389:SF9">
    <property type="entry name" value="DNA LIGASE"/>
    <property type="match status" value="1"/>
</dbReference>
<dbReference type="Pfam" id="PF00533">
    <property type="entry name" value="BRCT"/>
    <property type="match status" value="1"/>
</dbReference>
<dbReference type="Pfam" id="PF01653">
    <property type="entry name" value="DNA_ligase_aden"/>
    <property type="match status" value="1"/>
</dbReference>
<dbReference type="Pfam" id="PF03120">
    <property type="entry name" value="DNA_ligase_OB"/>
    <property type="match status" value="1"/>
</dbReference>
<dbReference type="Pfam" id="PF12826">
    <property type="entry name" value="HHH_2"/>
    <property type="match status" value="1"/>
</dbReference>
<dbReference type="Pfam" id="PF14520">
    <property type="entry name" value="HHH_5"/>
    <property type="match status" value="1"/>
</dbReference>
<dbReference type="PIRSF" id="PIRSF001604">
    <property type="entry name" value="LigA"/>
    <property type="match status" value="1"/>
</dbReference>
<dbReference type="SMART" id="SM00292">
    <property type="entry name" value="BRCT"/>
    <property type="match status" value="1"/>
</dbReference>
<dbReference type="SMART" id="SM00278">
    <property type="entry name" value="HhH1"/>
    <property type="match status" value="3"/>
</dbReference>
<dbReference type="SMART" id="SM00532">
    <property type="entry name" value="LIGANc"/>
    <property type="match status" value="1"/>
</dbReference>
<dbReference type="SUPFAM" id="SSF52113">
    <property type="entry name" value="BRCT domain"/>
    <property type="match status" value="1"/>
</dbReference>
<dbReference type="SUPFAM" id="SSF56091">
    <property type="entry name" value="DNA ligase/mRNA capping enzyme, catalytic domain"/>
    <property type="match status" value="1"/>
</dbReference>
<dbReference type="SUPFAM" id="SSF50249">
    <property type="entry name" value="Nucleic acid-binding proteins"/>
    <property type="match status" value="1"/>
</dbReference>
<dbReference type="SUPFAM" id="SSF47781">
    <property type="entry name" value="RuvA domain 2-like"/>
    <property type="match status" value="1"/>
</dbReference>
<dbReference type="PROSITE" id="PS50172">
    <property type="entry name" value="BRCT"/>
    <property type="match status" value="1"/>
</dbReference>
<proteinExistence type="inferred from homology"/>
<evidence type="ECO:0000255" key="1">
    <source>
        <dbReference type="HAMAP-Rule" id="MF_01588"/>
    </source>
</evidence>
<name>DNLJ_SULDN</name>
<sequence>MKKEQYIKAVELLNLYSYHYYVLDDAITTDEVYDKLYHEVLEYEESHKEDILKNSPTQRVGDTVSEGFSKAPHLSRMWSLEDVFDSDGLQKWLIKTYKLDSNISFYCEPKYDGASLNLIYENGELSQAITRGDGEVGELITQNVKTIRSVPLSIEHKEKIEIRGEVVIFKDEFEKINQTRLKDGEALFANPRNAAAGSLRQLDSSITASRNLVFLPYGVGENFLEHKLLSQKMEYIYSLGFKKPPFCATCKDFNEIEAVYQEMSRNRDSYPMMLDGMVVKVDEIAAQIDMGYTVKNPRFSVAYKFPAVEKITTIKEIILQVGRTGAVTPVAIVEPTNIDGVVVERATLHNFDEIQRKDIRINDHVIILRSGDVIPKIIKVLTHERDGSEVEYKRPTICPVCESELLDEGVLLKCQNLTCEARVINSIIYFASKPCLNIDGLGVKIVEALFNSGLVKSVVDLFDLTLEKLLTLEGFKEKKAQNLLDALGSAKGCEYWRFVNSLGIEHIGEVASKTLSAKFGSGFIDATKDEIVACDGVGEEMAESLLEFIRVNRETILKLQNILKPLEPLQRQEAKENPFKGKSVVLTGSMSESRDMIKEMLESLGAKVVSSVSKKTDFVIYGEDAGSKYDKAMDLGVECLNEDEMRSKIEQA</sequence>
<keyword id="KW-0227">DNA damage</keyword>
<keyword id="KW-0234">DNA repair</keyword>
<keyword id="KW-0235">DNA replication</keyword>
<keyword id="KW-0436">Ligase</keyword>
<keyword id="KW-0460">Magnesium</keyword>
<keyword id="KW-0464">Manganese</keyword>
<keyword id="KW-0479">Metal-binding</keyword>
<keyword id="KW-0520">NAD</keyword>
<keyword id="KW-1185">Reference proteome</keyword>
<keyword id="KW-0862">Zinc</keyword>
<accession>Q30QV9</accession>
<feature type="chain" id="PRO_0000313496" description="DNA ligase">
    <location>
        <begin position="1"/>
        <end position="652"/>
    </location>
</feature>
<feature type="domain" description="BRCT" evidence="1">
    <location>
        <begin position="574"/>
        <end position="652"/>
    </location>
</feature>
<feature type="active site" description="N6-AMP-lysine intermediate" evidence="1">
    <location>
        <position position="110"/>
    </location>
</feature>
<feature type="binding site" evidence="1">
    <location>
        <begin position="30"/>
        <end position="34"/>
    </location>
    <ligand>
        <name>NAD(+)</name>
        <dbReference type="ChEBI" id="CHEBI:57540"/>
    </ligand>
</feature>
<feature type="binding site" evidence="1">
    <location>
        <begin position="79"/>
        <end position="80"/>
    </location>
    <ligand>
        <name>NAD(+)</name>
        <dbReference type="ChEBI" id="CHEBI:57540"/>
    </ligand>
</feature>
<feature type="binding site" evidence="1">
    <location>
        <position position="108"/>
    </location>
    <ligand>
        <name>NAD(+)</name>
        <dbReference type="ChEBI" id="CHEBI:57540"/>
    </ligand>
</feature>
<feature type="binding site" evidence="1">
    <location>
        <position position="131"/>
    </location>
    <ligand>
        <name>NAD(+)</name>
        <dbReference type="ChEBI" id="CHEBI:57540"/>
    </ligand>
</feature>
<feature type="binding site" evidence="1">
    <location>
        <position position="165"/>
    </location>
    <ligand>
        <name>NAD(+)</name>
        <dbReference type="ChEBI" id="CHEBI:57540"/>
    </ligand>
</feature>
<feature type="binding site" evidence="1">
    <location>
        <position position="280"/>
    </location>
    <ligand>
        <name>NAD(+)</name>
        <dbReference type="ChEBI" id="CHEBI:57540"/>
    </ligand>
</feature>
<feature type="binding site" evidence="1">
    <location>
        <position position="304"/>
    </location>
    <ligand>
        <name>NAD(+)</name>
        <dbReference type="ChEBI" id="CHEBI:57540"/>
    </ligand>
</feature>
<feature type="binding site" evidence="1">
    <location>
        <position position="398"/>
    </location>
    <ligand>
        <name>Zn(2+)</name>
        <dbReference type="ChEBI" id="CHEBI:29105"/>
    </ligand>
</feature>
<feature type="binding site" evidence="1">
    <location>
        <position position="401"/>
    </location>
    <ligand>
        <name>Zn(2+)</name>
        <dbReference type="ChEBI" id="CHEBI:29105"/>
    </ligand>
</feature>
<feature type="binding site" evidence="1">
    <location>
        <position position="414"/>
    </location>
    <ligand>
        <name>Zn(2+)</name>
        <dbReference type="ChEBI" id="CHEBI:29105"/>
    </ligand>
</feature>
<feature type="binding site" evidence="1">
    <location>
        <position position="419"/>
    </location>
    <ligand>
        <name>Zn(2+)</name>
        <dbReference type="ChEBI" id="CHEBI:29105"/>
    </ligand>
</feature>
<organism>
    <name type="scientific">Sulfurimonas denitrificans (strain ATCC 33889 / DSM 1251)</name>
    <name type="common">Thiomicrospira denitrificans (strain ATCC 33889 / DSM 1251)</name>
    <dbReference type="NCBI Taxonomy" id="326298"/>
    <lineage>
        <taxon>Bacteria</taxon>
        <taxon>Pseudomonadati</taxon>
        <taxon>Campylobacterota</taxon>
        <taxon>Epsilonproteobacteria</taxon>
        <taxon>Campylobacterales</taxon>
        <taxon>Sulfurimonadaceae</taxon>
        <taxon>Sulfurimonas</taxon>
    </lineage>
</organism>